<sequence length="377" mass="41259">MRANCSSSSACPANSSEEELPVGLEVHGNLELVFTVVSTVMMGLLMFSLGCSVEIRKLWSHIRRPWGIAVGLLCQFGLMPFTAYLLAISFSLKPVQAIAVLIMGCCPGGTISNIFTFWVDGDMDLSISMTTCSTVAALGMMPLCIYLYTWSWSLQQNLTIPYQNIGITLVCLTIPVAFGVYVNYRWPKQSKIILKIGAVVGGVLLLVVAVAGVVLAKGSWNSDITLLTISFIFPLIGHVTGFLLALFTHQSWQRCRTISLETGAQNIQMCITMLQLSFTAEHLVQMLSFPLAYGLFQLIDGFLIVAAYQTYKRRLKNKHGKKNSGCTEVCHTRKSTSSRETNAFLEVNEEGAITPGPPGPMDCHRALEPVGHITSCE</sequence>
<feature type="chain" id="PRO_0000309215" description="Sodium-dependent organic anion transporter">
    <location>
        <begin position="1"/>
        <end position="377"/>
    </location>
</feature>
<feature type="topological domain" description="Extracellular" evidence="2">
    <location>
        <begin position="1"/>
        <end position="29"/>
    </location>
</feature>
<feature type="transmembrane region" description="Helical" evidence="2">
    <location>
        <begin position="30"/>
        <end position="50"/>
    </location>
</feature>
<feature type="topological domain" description="Cytoplasmic" evidence="2">
    <location>
        <begin position="51"/>
        <end position="67"/>
    </location>
</feature>
<feature type="transmembrane region" description="Helical" evidence="2">
    <location>
        <begin position="68"/>
        <end position="88"/>
    </location>
</feature>
<feature type="topological domain" description="Extracellular" evidence="2">
    <location>
        <begin position="89"/>
        <end position="97"/>
    </location>
</feature>
<feature type="transmembrane region" description="Helical" evidence="2">
    <location>
        <begin position="98"/>
        <end position="118"/>
    </location>
</feature>
<feature type="topological domain" description="Cytoplasmic" evidence="2">
    <location>
        <begin position="119"/>
        <end position="133"/>
    </location>
</feature>
<feature type="transmembrane region" description="Helical" evidence="2">
    <location>
        <begin position="134"/>
        <end position="154"/>
    </location>
</feature>
<feature type="topological domain" description="Extracellular" evidence="2">
    <location>
        <begin position="155"/>
        <end position="159"/>
    </location>
</feature>
<feature type="transmembrane region" description="Helical" evidence="2">
    <location>
        <begin position="160"/>
        <end position="180"/>
    </location>
</feature>
<feature type="topological domain" description="Cytoplasmic" evidence="2">
    <location>
        <begin position="181"/>
        <end position="195"/>
    </location>
</feature>
<feature type="transmembrane region" description="Helical" evidence="2">
    <location>
        <begin position="196"/>
        <end position="216"/>
    </location>
</feature>
<feature type="topological domain" description="Extracellular" evidence="2">
    <location>
        <begin position="217"/>
        <end position="226"/>
    </location>
</feature>
<feature type="transmembrane region" description="Helical" evidence="2">
    <location>
        <begin position="227"/>
        <end position="247"/>
    </location>
</feature>
<feature type="topological domain" description="Cytoplasmic" evidence="2">
    <location>
        <begin position="248"/>
        <end position="266"/>
    </location>
</feature>
<feature type="transmembrane region" description="Helical" evidence="2">
    <location>
        <begin position="267"/>
        <end position="285"/>
    </location>
</feature>
<feature type="topological domain" description="Extracellular" evidence="2">
    <location>
        <begin position="286"/>
        <end position="290"/>
    </location>
</feature>
<feature type="transmembrane region" description="Helical" evidence="2">
    <location>
        <begin position="291"/>
        <end position="311"/>
    </location>
</feature>
<feature type="topological domain" description="Cytoplasmic" evidence="2">
    <location>
        <begin position="312"/>
        <end position="377"/>
    </location>
</feature>
<feature type="glycosylation site" description="N-linked (GlcNAc...) asparagine" evidence="2">
    <location>
        <position position="4"/>
    </location>
</feature>
<feature type="glycosylation site" description="N-linked (GlcNAc...) asparagine" evidence="2">
    <location>
        <position position="157"/>
    </location>
</feature>
<feature type="sequence variant" id="VAR_036904" description="In dbSNP:rs17694522.">
    <original>S</original>
    <variation>F</variation>
    <location>
        <position position="6"/>
    </location>
</feature>
<feature type="sequence variant" id="VAR_036905" description="In dbSNP:rs13106574." evidence="3">
    <original>I</original>
    <variation>V</variation>
    <location>
        <position position="114"/>
    </location>
</feature>
<reference key="1">
    <citation type="journal article" date="2007" name="J. Biol. Chem.">
        <title>Cloning and functional characterization of human sodium-dependent organic anion transporter (SLC10A6).</title>
        <authorList>
            <person name="Geyer J."/>
            <person name="Doering B."/>
            <person name="Meerkamp K."/>
            <person name="Ugele B."/>
            <person name="Bakhiya N."/>
            <person name="Fernandes C.F."/>
            <person name="Godoy J.R."/>
            <person name="Glatt H."/>
            <person name="Petzinger E."/>
        </authorList>
    </citation>
    <scope>NUCLEOTIDE SEQUENCE [MRNA]</scope>
    <scope>FUNCTION</scope>
    <scope>TRANSPORTER ACTIVITY</scope>
    <scope>BIOPHYSICOCHEMICAL PROPERTIES</scope>
    <scope>TISSUE SPECIFICITY</scope>
    <scope>GLYCOSYLATION</scope>
    <scope>PROBABLE MEMBRANE TOPOLOGY</scope>
    <source>
        <tissue>Adrenal gland</tissue>
        <tissue>Testis</tissue>
    </source>
</reference>
<reference key="2">
    <citation type="submission" date="2005-07" db="EMBL/GenBank/DDBJ databases">
        <authorList>
            <person name="Mural R.J."/>
            <person name="Istrail S."/>
            <person name="Sutton G.G."/>
            <person name="Florea L."/>
            <person name="Halpern A.L."/>
            <person name="Mobarry C.M."/>
            <person name="Lippert R."/>
            <person name="Walenz B."/>
            <person name="Shatkay H."/>
            <person name="Dew I."/>
            <person name="Miller J.R."/>
            <person name="Flanigan M.J."/>
            <person name="Edwards N.J."/>
            <person name="Bolanos R."/>
            <person name="Fasulo D."/>
            <person name="Halldorsson B.V."/>
            <person name="Hannenhalli S."/>
            <person name="Turner R."/>
            <person name="Yooseph S."/>
            <person name="Lu F."/>
            <person name="Nusskern D.R."/>
            <person name="Shue B.C."/>
            <person name="Zheng X.H."/>
            <person name="Zhong F."/>
            <person name="Delcher A.L."/>
            <person name="Huson D.H."/>
            <person name="Kravitz S.A."/>
            <person name="Mouchard L."/>
            <person name="Reinert K."/>
            <person name="Remington K.A."/>
            <person name="Clark A.G."/>
            <person name="Waterman M.S."/>
            <person name="Eichler E.E."/>
            <person name="Adams M.D."/>
            <person name="Hunkapiller M.W."/>
            <person name="Myers E.W."/>
            <person name="Venter J.C."/>
        </authorList>
    </citation>
    <scope>NUCLEOTIDE SEQUENCE [LARGE SCALE GENOMIC DNA]</scope>
</reference>
<reference key="3">
    <citation type="journal article" date="2004" name="Genome Res.">
        <title>The status, quality, and expansion of the NIH full-length cDNA project: the Mammalian Gene Collection (MGC).</title>
        <authorList>
            <consortium name="The MGC Project Team"/>
        </authorList>
    </citation>
    <scope>NUCLEOTIDE SEQUENCE [LARGE SCALE MRNA]</scope>
    <scope>VARIANT VAL-114</scope>
</reference>
<reference key="4">
    <citation type="journal article" date="2013" name="PLoS ONE">
        <title>Membrane transporters for sulfated steroids in the human testis--cellular localization, expression pattern and functional analysis.</title>
        <authorList>
            <person name="Fietz D."/>
            <person name="Bakhaus K."/>
            <person name="Wapelhorst B."/>
            <person name="Grosser G."/>
            <person name="Guenther S."/>
            <person name="Alber J."/>
            <person name="Doering B."/>
            <person name="Kliesch S."/>
            <person name="Weidner W."/>
            <person name="Galuska C.E."/>
            <person name="Hartmann M.F."/>
            <person name="Wudy S.A."/>
            <person name="Bergmann M."/>
            <person name="Geyer J."/>
        </authorList>
    </citation>
    <scope>FUNCTION</scope>
    <scope>TRANSPORTER ACTIVITY</scope>
    <scope>TISSUE SPECIFICITY</scope>
    <scope>SUBCELLULAR LOCATION</scope>
</reference>
<reference key="5">
    <citation type="journal article" date="2014" name="J. Steroid Biochem. Mol. Biol.">
        <title>Transport of the placental estriol precursor 16alpha-hydroxy-dehydroepiandrosterone sulfate (16alpha-OH-DHEAS) by stably transfected OAT4-, SOAT-, and NTCP-HEK293 cells.</title>
        <authorList>
            <person name="Schweigmann H."/>
            <person name="Sanchez-Guijo A."/>
            <person name="Ugele B."/>
            <person name="Hartmann K."/>
            <person name="Hartmann M.F."/>
            <person name="Bergmann M."/>
            <person name="Pfarrer C."/>
            <person name="Doering B."/>
            <person name="Wudy S.A."/>
            <person name="Petzinger E."/>
            <person name="Geyer J."/>
            <person name="Grosser G."/>
        </authorList>
    </citation>
    <scope>FUNCTION</scope>
    <scope>TRANSPORTER ACTIVITY</scope>
    <scope>BIOPHYSICOCHEMICAL PROPERTIES</scope>
</reference>
<reference key="6">
    <citation type="journal article" date="2018" name="J. Steroid Biochem. Mol. Biol.">
        <title>Transport of steroid 3-sulfates and steroid 17-sulfates by the sodium-dependent organic anion transporter SOAT (SLC10A6).</title>
        <authorList>
            <person name="Grosser G."/>
            <person name="Bennien J."/>
            <person name="Sanchez-Guijo A."/>
            <person name="Bakhaus K."/>
            <person name="Doering B."/>
            <person name="Hartmann M."/>
            <person name="Wudy S.A."/>
            <person name="Geyer J."/>
        </authorList>
    </citation>
    <scope>FUNCTION</scope>
    <scope>TRANSPORTER ACTIVITY</scope>
</reference>
<accession>Q3KNW5</accession>
<accession>Q70EX7</accession>
<gene>
    <name type="primary">SLC10A6</name>
    <name type="synonym">SOAT</name>
</gene>
<keyword id="KW-0325">Glycoprotein</keyword>
<keyword id="KW-0406">Ion transport</keyword>
<keyword id="KW-0445">Lipid transport</keyword>
<keyword id="KW-0472">Membrane</keyword>
<keyword id="KW-1267">Proteomics identification</keyword>
<keyword id="KW-1185">Reference proteome</keyword>
<keyword id="KW-0915">Sodium</keyword>
<keyword id="KW-0739">Sodium transport</keyword>
<keyword id="KW-0769">Symport</keyword>
<keyword id="KW-0812">Transmembrane</keyword>
<keyword id="KW-1133">Transmembrane helix</keyword>
<keyword id="KW-0813">Transport</keyword>
<evidence type="ECO:0000250" key="1">
    <source>
        <dbReference type="UniProtKB" id="Q9CXB2"/>
    </source>
</evidence>
<evidence type="ECO:0000255" key="2"/>
<evidence type="ECO:0000269" key="3">
    <source>
    </source>
</evidence>
<evidence type="ECO:0000269" key="4">
    <source>
    </source>
</evidence>
<evidence type="ECO:0000269" key="5">
    <source>
    </source>
</evidence>
<evidence type="ECO:0000269" key="6">
    <source>
    </source>
</evidence>
<evidence type="ECO:0000269" key="7">
    <source>
    </source>
</evidence>
<evidence type="ECO:0000303" key="8">
    <source>
    </source>
</evidence>
<evidence type="ECO:0000303" key="9">
    <source>
    </source>
</evidence>
<evidence type="ECO:0000305" key="10"/>
<proteinExistence type="evidence at protein level"/>
<protein>
    <recommendedName>
        <fullName evidence="8 9">Sodium-dependent organic anion transporter</fullName>
        <shortName evidence="9">SOAT</shortName>
    </recommendedName>
    <alternativeName>
        <fullName evidence="8">Solute carrier family 10 member 6</fullName>
        <shortName evidence="8">SLC10A6</shortName>
    </alternativeName>
</protein>
<comment type="function">
    <text evidence="1 4 5 6 7">Transports sulfoconjugated steroid hormones from the extracellular compartment into the cytosol in a sodium-dependent manner without hydrolysis (PubMed:17491011, PubMed:23667501, PubMed:24717977, PubMed:28951227). Steroid sulfate hormones are commonly considered to be biologically inactive metabolites, that may be activated by steroid sulfatases into free steroids (PubMed:23667501, PubMed:24717977). May play an important role by delivering sulfoconjugated steroids to specific target cells in reproductive organs (By similarity). May play a role transporting the estriol precursor 16alpha-hydroxydehydroepiandrosterone 3-sulfate (16a-OH-DHEAS) at the fetal blood vessel endothelium (PubMed:24717977). Can also transport other sulfoconjugated molecules such as taurolithocholic acid-3-sulfate and sulfoconjugated pyrenes (PubMed:17491011).</text>
</comment>
<comment type="catalytic activity">
    <reaction evidence="4 5">
        <text>estrone 3-sulfate(out) + 2 Na(+)(out) = estrone 3-sulfate(in) + 2 Na(+)(in)</text>
        <dbReference type="Rhea" id="RHEA:71083"/>
        <dbReference type="ChEBI" id="CHEBI:29101"/>
        <dbReference type="ChEBI" id="CHEBI:60050"/>
    </reaction>
</comment>
<comment type="catalytic activity">
    <reaction evidence="5 7">
        <text>17beta-estradiol 3-sulfate(out) + 2 Na(+)(out) = 17beta-estradiol 3-sulfate(in) + 2 Na(+)(in)</text>
        <dbReference type="Rhea" id="RHEA:71087"/>
        <dbReference type="ChEBI" id="CHEBI:29101"/>
        <dbReference type="ChEBI" id="CHEBI:136582"/>
    </reaction>
</comment>
<comment type="catalytic activity">
    <reaction evidence="4 5 6">
        <text>dehydroepiandrosterone 3-sulfate(out) + 2 Na(+)(out) = dehydroepiandrosterone 3-sulfate(in) + 2 Na(+)(in)</text>
        <dbReference type="Rhea" id="RHEA:71091"/>
        <dbReference type="ChEBI" id="CHEBI:29101"/>
        <dbReference type="ChEBI" id="CHEBI:57905"/>
    </reaction>
</comment>
<comment type="catalytic activity">
    <reaction evidence="5">
        <text>androst-5-ene-diol 3-sulfate(out) + 2 Na(+)(out) = androst-5-ene-diol 3-sulfate(in) + 2 Na(+)(in)</text>
        <dbReference type="Rhea" id="RHEA:71099"/>
        <dbReference type="ChEBI" id="CHEBI:29101"/>
        <dbReference type="ChEBI" id="CHEBI:190287"/>
    </reaction>
</comment>
<comment type="catalytic activity">
    <reaction evidence="4 7">
        <text>pregnenolone sulfate(out) + 2 Na(+)(out) = pregnenolone sulfate(in) + 2 Na(+)(in)</text>
        <dbReference type="Rhea" id="RHEA:71095"/>
        <dbReference type="ChEBI" id="CHEBI:29101"/>
        <dbReference type="ChEBI" id="CHEBI:133000"/>
    </reaction>
</comment>
<comment type="catalytic activity">
    <reaction evidence="4">
        <text>taurolithocholate 3-sulfate(out) + 2 Na(+)(out) = taurolithocholate 3-sulfate(in) + 2 Na(+)(in)</text>
        <dbReference type="Rhea" id="RHEA:71275"/>
        <dbReference type="ChEBI" id="CHEBI:29101"/>
        <dbReference type="ChEBI" id="CHEBI:58301"/>
    </reaction>
</comment>
<comment type="catalytic activity">
    <reaction evidence="7">
        <text>androsterone 3alpha-sulfate(out) + 2 Na(+)(out) = androsterone 3alpha-sulfate(in) + 2 Na(+)(in)</text>
        <dbReference type="Rhea" id="RHEA:71351"/>
        <dbReference type="ChEBI" id="CHEBI:29101"/>
        <dbReference type="ChEBI" id="CHEBI:133003"/>
    </reaction>
</comment>
<comment type="catalytic activity">
    <reaction evidence="7">
        <text>5alpha-dihydrotestosterone sulfate(out) + 2 Na(+)(out) = 5alpha-dihydrotestosterone sulfate(in) + 2 Na(+)(in)</text>
        <dbReference type="Rhea" id="RHEA:71355"/>
        <dbReference type="ChEBI" id="CHEBI:29101"/>
        <dbReference type="ChEBI" id="CHEBI:136982"/>
    </reaction>
</comment>
<comment type="catalytic activity">
    <reaction evidence="7">
        <text>17beta-estradiol 17-sulfate(out) + 2 Na(+)(out) = 17beta-estradiol 17-sulfate(in) + 2 Na(+)(in)</text>
        <dbReference type="Rhea" id="RHEA:71359"/>
        <dbReference type="ChEBI" id="CHEBI:29101"/>
        <dbReference type="ChEBI" id="CHEBI:190469"/>
    </reaction>
</comment>
<comment type="catalytic activity">
    <reaction evidence="7">
        <text>17alpha-hydroxypregnenolone 3-sulfate(out) + 2 Na(+)(out) = 17alpha-hydroxypregnenolone 3-sulfate(in) + 2 Na(+)(in)</text>
        <dbReference type="Rhea" id="RHEA:71363"/>
        <dbReference type="ChEBI" id="CHEBI:29101"/>
        <dbReference type="ChEBI" id="CHEBI:133742"/>
    </reaction>
</comment>
<comment type="catalytic activity">
    <reaction evidence="7">
        <text>epiandrosterone 3-sulfate(out) + 2 Na(+)(out) = epiandrosterone 3-sulfate(in) + 2 Na(+)(in)</text>
        <dbReference type="Rhea" id="RHEA:71367"/>
        <dbReference type="ChEBI" id="CHEBI:29101"/>
        <dbReference type="ChEBI" id="CHEBI:133729"/>
    </reaction>
</comment>
<comment type="catalytic activity">
    <reaction evidence="7">
        <text>epitestosterone 17-sulfate(out) + 2 Na(+)(out) = epitestosterone 17-sulfate(in) + 2 Na(+)(in)</text>
        <dbReference type="Rhea" id="RHEA:71371"/>
        <dbReference type="ChEBI" id="CHEBI:29101"/>
        <dbReference type="ChEBI" id="CHEBI:190485"/>
    </reaction>
</comment>
<comment type="catalytic activity">
    <reaction evidence="7">
        <text>testosterone 17-sulfate(out) + 2 Na(+)(out) = testosterone 17-sulfate(in) + 2 Na(+)(in)</text>
        <dbReference type="Rhea" id="RHEA:71375"/>
        <dbReference type="ChEBI" id="CHEBI:29101"/>
        <dbReference type="ChEBI" id="CHEBI:190489"/>
    </reaction>
</comment>
<comment type="catalytic activity">
    <reaction evidence="6">
        <text>16alpha-hydroxydehydroepiandrosterone 3-sulfate(out) + 2 Na(+)(out) = 16alpha-hydroxydehydroepiandrosterone 3-sulfate(in) + 2 Na(+)(in)</text>
        <dbReference type="Rhea" id="RHEA:71391"/>
        <dbReference type="ChEBI" id="CHEBI:29101"/>
        <dbReference type="ChEBI" id="CHEBI:87538"/>
    </reaction>
</comment>
<comment type="biophysicochemical properties">
    <kinetics>
        <KM evidence="4">28.7 uM for dehydroepiandrosterone 3-sulfate (DHEAS)</KM>
        <KM evidence="4">12 uM for estrone 3-sulfate (E1S)</KM>
        <KM evidence="4">11.3 uM for pregnenolone sulfate (PREGS)</KM>
        <KM evidence="6">319 uM for 16alpha-hydroxydehydroepiandrosterone 3-sulfate (16a-OH-DHEAS)</KM>
        <Vmax evidence="6">1465.8 pmol/min/mg enzyme with 16alpha-hydroxydehydroepiandrosterone 3-sulfate (16a-OH-DHEAS) as substrate</Vmax>
        <Vmax evidence="4">1899.0 pmol/min/mg enzyme with dehydroepiandrosterone 3-sulfate (DHEAS) as substrate</Vmax>
        <Vmax evidence="4">585.0 pmol/min/mg enzyme with estrone 3-sulfate (E1S) as substrate</Vmax>
        <Vmax evidence="4">21685.0 pmol/min/mg enzyme with pregnenolone sulfate (PREGS) as substrate</Vmax>
    </kinetics>
</comment>
<comment type="interaction">
    <interactant intactId="EBI-18159983">
        <id>Q3KNW5</id>
    </interactant>
    <interactant intactId="EBI-2876927">
        <id>Q9ULC5</id>
        <label>ACSL5</label>
    </interactant>
    <organismsDiffer>false</organismsDiffer>
    <experiments>3</experiments>
</comment>
<comment type="interaction">
    <interactant intactId="EBI-18159983">
        <id>Q3KNW5</id>
    </interactant>
    <interactant intactId="EBI-12109402">
        <id>Q86W74-2</id>
        <label>ANKRD46</label>
    </interactant>
    <organismsDiffer>false</organismsDiffer>
    <experiments>3</experiments>
</comment>
<comment type="interaction">
    <interactant intactId="EBI-18159983">
        <id>Q3KNW5</id>
    </interactant>
    <interactant intactId="EBI-715495">
        <id>P05090</id>
        <label>APOD</label>
    </interactant>
    <organismsDiffer>false</organismsDiffer>
    <experiments>3</experiments>
</comment>
<comment type="interaction">
    <interactant intactId="EBI-18159983">
        <id>Q3KNW5</id>
    </interactant>
    <interactant intactId="EBI-714543">
        <id>Q15041</id>
        <label>ARL6IP1</label>
    </interactant>
    <organismsDiffer>false</organismsDiffer>
    <experiments>3</experiments>
</comment>
<comment type="interaction">
    <interactant intactId="EBI-18159983">
        <id>Q3KNW5</id>
    </interactant>
    <interactant intactId="EBI-11724186">
        <id>Q9H2C2</id>
        <label>ARV1</label>
    </interactant>
    <organismsDiffer>false</organismsDiffer>
    <experiments>3</experiments>
</comment>
<comment type="interaction">
    <interactant intactId="EBI-18159983">
        <id>Q3KNW5</id>
    </interactant>
    <interactant intactId="EBI-12069500">
        <id>Q9HD20-3</id>
        <label>ATP13A1</label>
    </interactant>
    <organismsDiffer>false</organismsDiffer>
    <experiments>3</experiments>
</comment>
<comment type="interaction">
    <interactant intactId="EBI-18159983">
        <id>Q3KNW5</id>
    </interactant>
    <interactant intactId="EBI-3922513">
        <id>O95393</id>
        <label>BMP10</label>
    </interactant>
    <organismsDiffer>false</organismsDiffer>
    <experiments>3</experiments>
</comment>
<comment type="interaction">
    <interactant intactId="EBI-18159983">
        <id>Q3KNW5</id>
    </interactant>
    <interactant intactId="EBI-8648738">
        <id>Q8WVV5</id>
        <label>BTN2A2</label>
    </interactant>
    <organismsDiffer>false</organismsDiffer>
    <experiments>3</experiments>
</comment>
<comment type="interaction">
    <interactant intactId="EBI-18159983">
        <id>Q3KNW5</id>
    </interactant>
    <interactant intactId="EBI-2836238">
        <id>Q96F05</id>
        <label>C11orf24</label>
    </interactant>
    <organismsDiffer>false</organismsDiffer>
    <experiments>3</experiments>
</comment>
<comment type="interaction">
    <interactant intactId="EBI-18159983">
        <id>Q3KNW5</id>
    </interactant>
    <interactant intactId="EBI-12822627">
        <id>O14523</id>
        <label>C2CD2L</label>
    </interactant>
    <organismsDiffer>false</organismsDiffer>
    <experiments>3</experiments>
</comment>
<comment type="interaction">
    <interactant intactId="EBI-18159983">
        <id>Q3KNW5</id>
    </interactant>
    <interactant intactId="EBI-9083477">
        <id>Q9P0B6</id>
        <label>CCDC167</label>
    </interactant>
    <organismsDiffer>false</organismsDiffer>
    <experiments>3</experiments>
</comment>
<comment type="interaction">
    <interactant intactId="EBI-18159983">
        <id>Q3KNW5</id>
    </interactant>
    <interactant intactId="EBI-2873970">
        <id>P13236</id>
        <label>CCL4</label>
    </interactant>
    <organismsDiffer>false</organismsDiffer>
    <experiments>3</experiments>
</comment>
<comment type="interaction">
    <interactant intactId="EBI-18159983">
        <id>Q3KNW5</id>
    </interactant>
    <interactant intactId="EBI-358858">
        <id>O14735</id>
        <label>CDIPT</label>
    </interactant>
    <organismsDiffer>false</organismsDiffer>
    <experiments>3</experiments>
</comment>
<comment type="interaction">
    <interactant intactId="EBI-18159983">
        <id>Q3KNW5</id>
    </interactant>
    <interactant intactId="EBI-13295305">
        <id>Q92903</id>
        <label>CDS1</label>
    </interactant>
    <organismsDiffer>false</organismsDiffer>
    <experiments>3</experiments>
</comment>
<comment type="interaction">
    <interactant intactId="EBI-18159983">
        <id>Q3KNW5</id>
    </interactant>
    <interactant intactId="EBI-11959453">
        <id>Q8NHS1</id>
        <label>CLDND2</label>
    </interactant>
    <organismsDiffer>false</organismsDiffer>
    <experiments>3</experiments>
</comment>
<comment type="interaction">
    <interactant intactId="EBI-18159983">
        <id>Q3KNW5</id>
    </interactant>
    <interactant intactId="EBI-11522780">
        <id>Q96DZ9-2</id>
        <label>CMTM5</label>
    </interactant>
    <organismsDiffer>false</organismsDiffer>
    <experiments>3</experiments>
</comment>
<comment type="interaction">
    <interactant intactId="EBI-18159983">
        <id>Q3KNW5</id>
    </interactant>
    <interactant intactId="EBI-12172273">
        <id>O95406</id>
        <label>CNIH1</label>
    </interactant>
    <organismsDiffer>false</organismsDiffer>
    <experiments>3</experiments>
</comment>
<comment type="interaction">
    <interactant intactId="EBI-18159983">
        <id>Q3KNW5</id>
    </interactant>
    <interactant intactId="EBI-12211159">
        <id>P29400-2</id>
        <label>COL4A5</label>
    </interactant>
    <organismsDiffer>false</organismsDiffer>
    <experiments>3</experiments>
</comment>
<comment type="interaction">
    <interactant intactId="EBI-18159983">
        <id>Q3KNW5</id>
    </interactant>
    <interactant intactId="EBI-372265">
        <id>P21964</id>
        <label>COMT</label>
    </interactant>
    <organismsDiffer>false</organismsDiffer>
    <experiments>3</experiments>
</comment>
<comment type="interaction">
    <interactant intactId="EBI-18159983">
        <id>Q3KNW5</id>
    </interactant>
    <interactant intactId="EBI-2834035">
        <id>Q5RI15</id>
        <label>COX20</label>
    </interactant>
    <organismsDiffer>false</organismsDiffer>
    <experiments>3</experiments>
</comment>
<comment type="interaction">
    <interactant intactId="EBI-18159983">
        <id>Q3KNW5</id>
    </interactant>
    <interactant intactId="EBI-1058710">
        <id>O43169</id>
        <label>CYB5B</label>
    </interactant>
    <organismsDiffer>false</organismsDiffer>
    <experiments>3</experiments>
</comment>
<comment type="interaction">
    <interactant intactId="EBI-18159983">
        <id>Q3KNW5</id>
    </interactant>
    <interactant intactId="EBI-1046040">
        <id>P00387</id>
        <label>CYB5R3</label>
    </interactant>
    <organismsDiffer>false</organismsDiffer>
    <experiments>3</experiments>
</comment>
<comment type="interaction">
    <interactant intactId="EBI-18159983">
        <id>Q3KNW5</id>
    </interactant>
    <interactant intactId="EBI-1752413">
        <id>P78329</id>
        <label>CYP4F2</label>
    </interactant>
    <organismsDiffer>false</organismsDiffer>
    <experiments>3</experiments>
</comment>
<comment type="interaction">
    <interactant intactId="EBI-18159983">
        <id>Q3KNW5</id>
    </interactant>
    <interactant intactId="EBI-398977">
        <id>Q9BUN8</id>
        <label>DERL1</label>
    </interactant>
    <organismsDiffer>false</organismsDiffer>
    <experiments>3</experiments>
</comment>
<comment type="interaction">
    <interactant intactId="EBI-18159983">
        <id>Q3KNW5</id>
    </interactant>
    <interactant intactId="EBI-12831978">
        <id>Q6ZPD8</id>
        <label>DGAT2L6</label>
    </interactant>
    <organismsDiffer>false</organismsDiffer>
    <experiments>3</experiments>
</comment>
<comment type="interaction">
    <interactant intactId="EBI-18159983">
        <id>Q3KNW5</id>
    </interactant>
    <interactant intactId="EBI-2820492">
        <id>Q9BV81</id>
        <label>EMC6</label>
    </interactant>
    <organismsDiffer>false</organismsDiffer>
    <experiments>3</experiments>
</comment>
<comment type="interaction">
    <interactant intactId="EBI-18159983">
        <id>Q3KNW5</id>
    </interactant>
    <interactant intactId="EBI-711490">
        <id>Q9UKR5</id>
        <label>ERG28</label>
    </interactant>
    <organismsDiffer>false</organismsDiffer>
    <experiments>3</experiments>
</comment>
<comment type="interaction">
    <interactant intactId="EBI-18159983">
        <id>Q3KNW5</id>
    </interactant>
    <interactant intactId="EBI-11337888">
        <id>Q7L5A8</id>
        <label>FA2H</label>
    </interactant>
    <organismsDiffer>false</organismsDiffer>
    <experiments>3</experiments>
</comment>
<comment type="interaction">
    <interactant intactId="EBI-18159983">
        <id>Q3KNW5</id>
    </interactant>
    <interactant intactId="EBI-2876774">
        <id>Q92520</id>
        <label>FAM3C</label>
    </interactant>
    <organismsDiffer>false</organismsDiffer>
    <experiments>3</experiments>
</comment>
<comment type="interaction">
    <interactant intactId="EBI-18159983">
        <id>Q3KNW5</id>
    </interactant>
    <interactant intactId="EBI-12142299">
        <id>Q96IV6</id>
        <label>FAXDC2</label>
    </interactant>
    <organismsDiffer>false</organismsDiffer>
    <experiments>3</experiments>
</comment>
<comment type="interaction">
    <interactant intactId="EBI-18159983">
        <id>Q3KNW5</id>
    </interactant>
    <interactant intactId="EBI-3385283">
        <id>Q9Y3D6</id>
        <label>FIS1</label>
    </interactant>
    <organismsDiffer>false</organismsDiffer>
    <experiments>3</experiments>
</comment>
<comment type="interaction">
    <interactant intactId="EBI-18159983">
        <id>Q3KNW5</id>
    </interactant>
    <interactant intactId="EBI-724839">
        <id>Q14318</id>
        <label>FKBP8</label>
    </interactant>
    <organismsDiffer>false</organismsDiffer>
    <experiments>3</experiments>
</comment>
<comment type="interaction">
    <interactant intactId="EBI-18159983">
        <id>Q3KNW5</id>
    </interactant>
    <interactant intactId="EBI-12701460">
        <id>Q01740</id>
        <label>FMO1</label>
    </interactant>
    <organismsDiffer>false</organismsDiffer>
    <experiments>3</experiments>
</comment>
<comment type="interaction">
    <interactant intactId="EBI-18159983">
        <id>Q3KNW5</id>
    </interactant>
    <interactant intactId="EBI-714482">
        <id>Q9BWH2</id>
        <label>FUNDC2</label>
    </interactant>
    <organismsDiffer>false</organismsDiffer>
    <experiments>3</experiments>
</comment>
<comment type="interaction">
    <interactant intactId="EBI-18159983">
        <id>Q3KNW5</id>
    </interactant>
    <interactant intactId="EBI-12175685">
        <id>Q14802-3</id>
        <label>FXYD3</label>
    </interactant>
    <organismsDiffer>false</organismsDiffer>
    <experiments>3</experiments>
</comment>
<comment type="interaction">
    <interactant intactId="EBI-18159983">
        <id>Q3KNW5</id>
    </interactant>
    <interactant intactId="EBI-713304">
        <id>Q9H0Q3</id>
        <label>FXYD6</label>
    </interactant>
    <organismsDiffer>false</organismsDiffer>
    <experiments>3</experiments>
</comment>
<comment type="interaction">
    <interactant intactId="EBI-18159983">
        <id>Q3KNW5</id>
    </interactant>
    <interactant intactId="EBI-11991950">
        <id>Q8WWP7</id>
        <label>GIMAP1</label>
    </interactant>
    <organismsDiffer>false</organismsDiffer>
    <experiments>3</experiments>
</comment>
<comment type="interaction">
    <interactant intactId="EBI-18159983">
        <id>Q3KNW5</id>
    </interactant>
    <interactant intactId="EBI-13345609">
        <id>O95452</id>
        <label>GJB6</label>
    </interactant>
    <organismsDiffer>false</organismsDiffer>
    <experiments>3</experiments>
</comment>
<comment type="interaction">
    <interactant intactId="EBI-18159983">
        <id>Q3KNW5</id>
    </interactant>
    <interactant intactId="EBI-989638">
        <id>P16278</id>
        <label>GLB1</label>
    </interactant>
    <organismsDiffer>false</organismsDiffer>
    <experiments>3</experiments>
</comment>
<comment type="interaction">
    <interactant intactId="EBI-18159983">
        <id>Q3KNW5</id>
    </interactant>
    <interactant intactId="EBI-4402607">
        <id>Q9Y3E0</id>
        <label>GOLT1B</label>
    </interactant>
    <organismsDiffer>false</organismsDiffer>
    <experiments>3</experiments>
</comment>
<comment type="interaction">
    <interactant intactId="EBI-18159983">
        <id>Q3KNW5</id>
    </interactant>
    <interactant intactId="EBI-4401517">
        <id>O14653</id>
        <label>GOSR2</label>
    </interactant>
    <organismsDiffer>false</organismsDiffer>
    <experiments>3</experiments>
</comment>
<comment type="interaction">
    <interactant intactId="EBI-18159983">
        <id>Q3KNW5</id>
    </interactant>
    <interactant intactId="EBI-11955647">
        <id>Q8TDV0</id>
        <label>GPR151</label>
    </interactant>
    <organismsDiffer>false</organismsDiffer>
    <experiments>3</experiments>
</comment>
<comment type="interaction">
    <interactant intactId="EBI-18159983">
        <id>Q3KNW5</id>
    </interactant>
    <interactant intactId="EBI-702665">
        <id>P02724</id>
        <label>GYPA</label>
    </interactant>
    <organismsDiffer>false</organismsDiffer>
    <experiments>3</experiments>
</comment>
<comment type="interaction">
    <interactant intactId="EBI-18159983">
        <id>Q3KNW5</id>
    </interactant>
    <interactant intactId="EBI-7797098">
        <id>P04921</id>
        <label>GYPC</label>
    </interactant>
    <organismsDiffer>false</organismsDiffer>
    <experiments>3</experiments>
</comment>
<comment type="interaction">
    <interactant intactId="EBI-18159983">
        <id>Q3KNW5</id>
    </interactant>
    <interactant intactId="EBI-12937691">
        <id>Q9BUP3-3</id>
        <label>HTATIP2</label>
    </interactant>
    <organismsDiffer>false</organismsDiffer>
    <experiments>3</experiments>
</comment>
<comment type="interaction">
    <interactant intactId="EBI-18159983">
        <id>Q3KNW5</id>
    </interactant>
    <interactant intactId="EBI-720480">
        <id>P24593</id>
        <label>IGFBP5</label>
    </interactant>
    <organismsDiffer>false</organismsDiffer>
    <experiments>3</experiments>
</comment>
<comment type="interaction">
    <interactant intactId="EBI-18159983">
        <id>Q3KNW5</id>
    </interactant>
    <interactant intactId="EBI-2568251">
        <id>P11215</id>
        <label>ITGAM</label>
    </interactant>
    <organismsDiffer>false</organismsDiffer>
    <experiments>3</experiments>
</comment>
<comment type="interaction">
    <interactant intactId="EBI-18159983">
        <id>Q3KNW5</id>
    </interactant>
    <interactant intactId="EBI-12033434">
        <id>Q9UBY5</id>
        <label>LPAR3</label>
    </interactant>
    <organismsDiffer>false</organismsDiffer>
    <experiments>3</experiments>
</comment>
<comment type="interaction">
    <interactant intactId="EBI-18159983">
        <id>Q3KNW5</id>
    </interactant>
    <interactant intactId="EBI-3930711">
        <id>P48449</id>
        <label>LSS</label>
    </interactant>
    <organismsDiffer>false</organismsDiffer>
    <experiments>3</experiments>
</comment>
<comment type="interaction">
    <interactant intactId="EBI-18159983">
        <id>Q3KNW5</id>
    </interactant>
    <interactant intactId="EBI-750078">
        <id>Q13021</id>
        <label>MALL</label>
    </interactant>
    <organismsDiffer>false</organismsDiffer>
    <experiments>3</experiments>
</comment>
<comment type="interaction">
    <interactant intactId="EBI-18159983">
        <id>Q3KNW5</id>
    </interactant>
    <interactant intactId="EBI-3920969">
        <id>Q6N075</id>
        <label>MFSD5</label>
    </interactant>
    <organismsDiffer>false</organismsDiffer>
    <experiments>3</experiments>
</comment>
<comment type="interaction">
    <interactant intactId="EBI-18159983">
        <id>Q3KNW5</id>
    </interactant>
    <interactant intactId="EBI-2858252">
        <id>Q6ZSS7</id>
        <label>MFSD6</label>
    </interactant>
    <organismsDiffer>false</organismsDiffer>
    <experiments>3</experiments>
</comment>
<comment type="interaction">
    <interactant intactId="EBI-18159983">
        <id>Q3KNW5</id>
    </interactant>
    <interactant intactId="EBI-12866138">
        <id>A0A0C4DFN3</id>
        <label>MGLL</label>
    </interactant>
    <organismsDiffer>false</organismsDiffer>
    <experiments>3</experiments>
</comment>
<comment type="interaction">
    <interactant intactId="EBI-18159983">
        <id>Q3KNW5</id>
    </interactant>
    <interactant intactId="EBI-2808234">
        <id>P11836</id>
        <label>MS4A1</label>
    </interactant>
    <organismsDiffer>false</organismsDiffer>
    <experiments>3</experiments>
</comment>
<comment type="interaction">
    <interactant intactId="EBI-18159983">
        <id>Q3KNW5</id>
    </interactant>
    <interactant intactId="EBI-2863634">
        <id>Q9UHE5</id>
        <label>NAT8</label>
    </interactant>
    <organismsDiffer>false</organismsDiffer>
    <experiments>3</experiments>
</comment>
<comment type="interaction">
    <interactant intactId="EBI-18159983">
        <id>Q3KNW5</id>
    </interactant>
    <interactant intactId="EBI-721517">
        <id>Q99519</id>
        <label>NEU1</label>
    </interactant>
    <organismsDiffer>false</organismsDiffer>
    <experiments>3</experiments>
</comment>
<comment type="interaction">
    <interactant intactId="EBI-18159983">
        <id>Q3KNW5</id>
    </interactant>
    <interactant intactId="EBI-10317425">
        <id>Q9NZG7</id>
        <label>NINJ2</label>
    </interactant>
    <organismsDiffer>false</organismsDiffer>
    <experiments>3</experiments>
</comment>
<comment type="interaction">
    <interactant intactId="EBI-18159983">
        <id>Q3KNW5</id>
    </interactant>
    <interactant intactId="EBI-10262547">
        <id>Q8IXM6</id>
        <label>NRM</label>
    </interactant>
    <organismsDiffer>false</organismsDiffer>
    <experiments>3</experiments>
</comment>
<comment type="interaction">
    <interactant intactId="EBI-18159983">
        <id>Q3KNW5</id>
    </interactant>
    <interactant intactId="EBI-18164026">
        <id>Q8NG98</id>
        <label>OR7D4</label>
    </interactant>
    <organismsDiffer>false</organismsDiffer>
    <experiments>3</experiments>
</comment>
<comment type="interaction">
    <interactant intactId="EBI-18159983">
        <id>Q3KNW5</id>
    </interactant>
    <interactant intactId="EBI-1054848">
        <id>Q9P0S3</id>
        <label>ORMDL1</label>
    </interactant>
    <organismsDiffer>false</organismsDiffer>
    <experiments>3</experiments>
</comment>
<comment type="interaction">
    <interactant intactId="EBI-18159983">
        <id>Q3KNW5</id>
    </interactant>
    <interactant intactId="EBI-2804080">
        <id>Q99650</id>
        <label>OSMR</label>
    </interactant>
    <organismsDiffer>false</organismsDiffer>
    <experiments>3</experiments>
</comment>
<comment type="interaction">
    <interactant intactId="EBI-18159983">
        <id>Q3KNW5</id>
    </interactant>
    <interactant intactId="EBI-12213001">
        <id>I3L0A0</id>
        <label>PEDS1-UBE2V1</label>
    </interactant>
    <organismsDiffer>false</organismsDiffer>
    <experiments>3</experiments>
</comment>
<comment type="interaction">
    <interactant intactId="EBI-18159983">
        <id>Q3KNW5</id>
    </interactant>
    <interactant intactId="EBI-981985">
        <id>Q9Y5Y5</id>
        <label>PEX16</label>
    </interactant>
    <organismsDiffer>false</organismsDiffer>
    <experiments>3</experiments>
</comment>
<comment type="interaction">
    <interactant intactId="EBI-18159983">
        <id>Q3KNW5</id>
    </interactant>
    <interactant intactId="EBI-6164623">
        <id>Q86T03</id>
        <label>PIP4P1</label>
    </interactant>
    <organismsDiffer>false</organismsDiffer>
    <experiments>3</experiments>
</comment>
<comment type="interaction">
    <interactant intactId="EBI-18159983">
        <id>Q3KNW5</id>
    </interactant>
    <interactant intactId="EBI-2820617">
        <id>Q8N4L2</id>
        <label>PIP4P2</label>
    </interactant>
    <organismsDiffer>false</organismsDiffer>
    <experiments>3</experiments>
</comment>
<comment type="interaction">
    <interactant intactId="EBI-18159983">
        <id>Q3KNW5</id>
    </interactant>
    <interactant intactId="EBI-3919291">
        <id>Q9Y342</id>
        <label>PLLP</label>
    </interactant>
    <organismsDiffer>false</organismsDiffer>
    <experiments>3</experiments>
</comment>
<comment type="interaction">
    <interactant intactId="EBI-18159983">
        <id>Q3KNW5</id>
    </interactant>
    <interactant intactId="EBI-12188331">
        <id>P60201-2</id>
        <label>PLP1</label>
    </interactant>
    <organismsDiffer>false</organismsDiffer>
    <experiments>3</experiments>
</comment>
<comment type="interaction">
    <interactant intactId="EBI-18159983">
        <id>Q3KNW5</id>
    </interactant>
    <interactant intactId="EBI-8652812">
        <id>P54315</id>
        <label>PNLIPRP1</label>
    </interactant>
    <organismsDiffer>false</organismsDiffer>
    <experiments>3</experiments>
</comment>
<comment type="interaction">
    <interactant intactId="EBI-18159983">
        <id>Q3KNW5</id>
    </interactant>
    <interactant intactId="EBI-2506064">
        <id>O60831</id>
        <label>PRAF2</label>
    </interactant>
    <organismsDiffer>false</organismsDiffer>
    <experiments>3</experiments>
</comment>
<comment type="interaction">
    <interactant intactId="EBI-18159983">
        <id>Q3KNW5</id>
    </interactant>
    <interactant intactId="EBI-722696">
        <id>Q7Z6L0</id>
        <label>PRRT2</label>
    </interactant>
    <organismsDiffer>false</organismsDiffer>
    <experiments>3</experiments>
</comment>
<comment type="interaction">
    <interactant intactId="EBI-18159983">
        <id>Q3KNW5</id>
    </interactant>
    <interactant intactId="EBI-11047108">
        <id>P49768-2</id>
        <label>PSEN1</label>
    </interactant>
    <organismsDiffer>false</organismsDiffer>
    <experiments>3</experiments>
</comment>
<comment type="interaction">
    <interactant intactId="EBI-18159983">
        <id>Q3KNW5</id>
    </interactant>
    <interactant intactId="EBI-998468">
        <id>Q9NZ42</id>
        <label>PSENEN</label>
    </interactant>
    <organismsDiffer>false</organismsDiffer>
    <experiments>3</experiments>
</comment>
<comment type="interaction">
    <interactant intactId="EBI-18159983">
        <id>Q3KNW5</id>
    </interactant>
    <interactant intactId="EBI-13044680">
        <id>Q9Y225-2</id>
        <label>RNF24</label>
    </interactant>
    <organismsDiffer>false</organismsDiffer>
    <experiments>3</experiments>
</comment>
<comment type="interaction">
    <interactant intactId="EBI-18159983">
        <id>Q3KNW5</id>
    </interactant>
    <interactant intactId="EBI-10244780">
        <id>Q5QGT7</id>
        <label>RTP2</label>
    </interactant>
    <organismsDiffer>false</organismsDiffer>
    <experiments>3</experiments>
</comment>
<comment type="interaction">
    <interactant intactId="EBI-18159983">
        <id>Q3KNW5</id>
    </interactant>
    <interactant intactId="EBI-8636004">
        <id>Q96GQ5</id>
        <label>RUSF1</label>
    </interactant>
    <organismsDiffer>false</organismsDiffer>
    <experiments>3</experiments>
</comment>
<comment type="interaction">
    <interactant intactId="EBI-18159983">
        <id>Q3KNW5</id>
    </interactant>
    <interactant intactId="EBI-3917235">
        <id>Q9NTJ5</id>
        <label>SACM1L</label>
    </interactant>
    <organismsDiffer>false</organismsDiffer>
    <experiments>3</experiments>
</comment>
<comment type="interaction">
    <interactant intactId="EBI-18159983">
        <id>Q3KNW5</id>
    </interactant>
    <interactant intactId="EBI-4403649">
        <id>Q969E2</id>
        <label>SCAMP4</label>
    </interactant>
    <organismsDiffer>false</organismsDiffer>
    <experiments>3</experiments>
</comment>
<comment type="interaction">
    <interactant intactId="EBI-18159983">
        <id>Q3KNW5</id>
    </interactant>
    <interactant intactId="EBI-2695784">
        <id>Q8TAC9</id>
        <label>SCAMP5</label>
    </interactant>
    <organismsDiffer>false</organismsDiffer>
    <experiments>3</experiments>
</comment>
<comment type="interaction">
    <interactant intactId="EBI-18159983">
        <id>Q3KNW5</id>
    </interactant>
    <interactant intactId="EBI-2684237">
        <id>O00767</id>
        <label>SCD</label>
    </interactant>
    <organismsDiffer>false</organismsDiffer>
    <experiments>3</experiments>
</comment>
<comment type="interaction">
    <interactant intactId="EBI-18159983">
        <id>Q3KNW5</id>
    </interactant>
    <interactant intactId="EBI-10329948">
        <id>Q9Y6X1</id>
        <label>SERP1</label>
    </interactant>
    <organismsDiffer>false</organismsDiffer>
    <experiments>3</experiments>
</comment>
<comment type="interaction">
    <interactant intactId="EBI-18159983">
        <id>Q3KNW5</id>
    </interactant>
    <interactant intactId="EBI-749270">
        <id>Q8N6R1</id>
        <label>SERP2</label>
    </interactant>
    <organismsDiffer>false</organismsDiffer>
    <experiments>3</experiments>
</comment>
<comment type="interaction">
    <interactant intactId="EBI-18159983">
        <id>Q3KNW5</id>
    </interactant>
    <interactant intactId="EBI-4402330">
        <id>O95562</id>
        <label>SFT2D2</label>
    </interactant>
    <organismsDiffer>false</organismsDiffer>
    <experiments>3</experiments>
</comment>
<comment type="interaction">
    <interactant intactId="EBI-18159983">
        <id>Q3KNW5</id>
    </interactant>
    <interactant intactId="EBI-355861">
        <id>Q9H9B4</id>
        <label>SFXN1</label>
    </interactant>
    <organismsDiffer>false</organismsDiffer>
    <experiments>3</experiments>
</comment>
<comment type="interaction">
    <interactant intactId="EBI-18159983">
        <id>Q3KNW5</id>
    </interactant>
    <interactant intactId="EBI-12854384">
        <id>Q9Y666-2</id>
        <label>SLC12A7</label>
    </interactant>
    <organismsDiffer>false</organismsDiffer>
    <experiments>3</experiments>
</comment>
<comment type="interaction">
    <interactant intactId="EBI-18159983">
        <id>Q3KNW5</id>
    </interactant>
    <interactant intactId="EBI-10281975">
        <id>Q96AG3</id>
        <label>SLC25A46</label>
    </interactant>
    <organismsDiffer>false</organismsDiffer>
    <experiments>3</experiments>
</comment>
<comment type="interaction">
    <interactant intactId="EBI-18159983">
        <id>Q3KNW5</id>
    </interactant>
    <interactant intactId="EBI-8644112">
        <id>Q9BRI3</id>
        <label>SLC30A2</label>
    </interactant>
    <organismsDiffer>false</organismsDiffer>
    <experiments>3</experiments>
</comment>
<comment type="interaction">
    <interactant intactId="EBI-18159983">
        <id>Q3KNW5</id>
    </interactant>
    <interactant intactId="EBI-10294651">
        <id>Q99726</id>
        <label>SLC30A3</label>
    </interactant>
    <organismsDiffer>false</organismsDiffer>
    <experiments>3</experiments>
</comment>
<comment type="interaction">
    <interactant intactId="EBI-18159983">
        <id>Q3KNW5</id>
    </interactant>
    <interactant intactId="EBI-17295964">
        <id>Q9NQQ7-3</id>
        <label>SLC35C2</label>
    </interactant>
    <organismsDiffer>false</organismsDiffer>
    <experiments>3</experiments>
</comment>
<comment type="interaction">
    <interactant intactId="EBI-18159983">
        <id>Q3KNW5</id>
    </interactant>
    <interactant intactId="EBI-727304">
        <id>Q8TBE7</id>
        <label>SLC35G2</label>
    </interactant>
    <organismsDiffer>false</organismsDiffer>
    <experiments>3</experiments>
</comment>
<comment type="interaction">
    <interactant intactId="EBI-18159983">
        <id>Q3KNW5</id>
    </interactant>
    <interactant intactId="EBI-9978441">
        <id>Q9H2H9</id>
        <label>SLC38A1</label>
    </interactant>
    <organismsDiffer>false</organismsDiffer>
    <experiments>3</experiments>
</comment>
<comment type="interaction">
    <interactant intactId="EBI-18159983">
        <id>Q3KNW5</id>
    </interactant>
    <interactant intactId="EBI-12956703">
        <id>Q13433-2</id>
        <label>SLC39A6</label>
    </interactant>
    <organismsDiffer>false</organismsDiffer>
    <experiments>3</experiments>
</comment>
<comment type="interaction">
    <interactant intactId="EBI-18159983">
        <id>Q3KNW5</id>
    </interactant>
    <interactant intactId="EBI-2823239">
        <id>Q9NUM3</id>
        <label>SLC39A9</label>
    </interactant>
    <organismsDiffer>false</organismsDiffer>
    <experiments>3</experiments>
</comment>
<comment type="interaction">
    <interactant intactId="EBI-18159983">
        <id>Q3KNW5</id>
    </interactant>
    <interactant intactId="EBI-12266234">
        <id>Q8IVJ1</id>
        <label>SLC41A1</label>
    </interactant>
    <organismsDiffer>false</organismsDiffer>
    <experiments>3</experiments>
</comment>
<comment type="interaction">
    <interactant intactId="EBI-18159983">
        <id>Q3KNW5</id>
    </interactant>
    <interactant intactId="EBI-3907610">
        <id>Q8N2U9</id>
        <label>SLC66A2</label>
    </interactant>
    <organismsDiffer>false</organismsDiffer>
    <experiments>3</experiments>
</comment>
<comment type="interaction">
    <interactant intactId="EBI-18159983">
        <id>Q3KNW5</id>
    </interactant>
    <interactant intactId="EBI-4289564">
        <id>P30825</id>
        <label>SLC7A1</label>
    </interactant>
    <organismsDiffer>false</organismsDiffer>
    <experiments>3</experiments>
</comment>
<comment type="interaction">
    <interactant intactId="EBI-18159983">
        <id>Q3KNW5</id>
    </interactant>
    <interactant intactId="EBI-10226799">
        <id>Q0VAQ4</id>
        <label>SMAGP</label>
    </interactant>
    <organismsDiffer>false</organismsDiffer>
    <experiments>3</experiments>
</comment>
<comment type="interaction">
    <interactant intactId="EBI-18159983">
        <id>Q3KNW5</id>
    </interactant>
    <interactant intactId="EBI-12188413">
        <id>B2RUZ4</id>
        <label>SMIM1</label>
    </interactant>
    <organismsDiffer>false</organismsDiffer>
    <experiments>3</experiments>
</comment>
<comment type="interaction">
    <interactant intactId="EBI-18159983">
        <id>Q3KNW5</id>
    </interactant>
    <interactant intactId="EBI-11957067">
        <id>Q6UX34</id>
        <label>SNORC</label>
    </interactant>
    <organismsDiffer>false</organismsDiffer>
    <experiments>3</experiments>
</comment>
<comment type="interaction">
    <interactant intactId="EBI-18159983">
        <id>Q3KNW5</id>
    </interactant>
    <interactant intactId="EBI-738687">
        <id>P02808</id>
        <label>STATH</label>
    </interactant>
    <organismsDiffer>false</organismsDiffer>
    <experiments>3</experiments>
</comment>
<comment type="interaction">
    <interactant intactId="EBI-18159983">
        <id>Q3KNW5</id>
    </interactant>
    <interactant intactId="EBI-2691717">
        <id>Q86Y82</id>
        <label>STX12</label>
    </interactant>
    <organismsDiffer>false</organismsDiffer>
    <experiments>3</experiments>
</comment>
<comment type="interaction">
    <interactant intactId="EBI-18159983">
        <id>Q3KNW5</id>
    </interactant>
    <interactant intactId="EBI-3221827">
        <id>O15400</id>
        <label>STX7</label>
    </interactant>
    <organismsDiffer>false</organismsDiffer>
    <experiments>3</experiments>
</comment>
<comment type="interaction">
    <interactant intactId="EBI-18159983">
        <id>Q3KNW5</id>
    </interactant>
    <interactant intactId="EBI-727240">
        <id>Q9UNK0</id>
        <label>STX8</label>
    </interactant>
    <organismsDiffer>false</organismsDiffer>
    <experiments>3</experiments>
</comment>
<comment type="interaction">
    <interactant intactId="EBI-18159983">
        <id>Q3KNW5</id>
    </interactant>
    <interactant intactId="EBI-12187159">
        <id>O43759-2</id>
        <label>SYNGR1</label>
    </interactant>
    <organismsDiffer>false</organismsDiffer>
    <experiments>3</experiments>
</comment>
<comment type="interaction">
    <interactant intactId="EBI-18159983">
        <id>Q3KNW5</id>
    </interactant>
    <interactant intactId="EBI-1049004">
        <id>P57105</id>
        <label>SYNJ2BP</label>
    </interactant>
    <organismsDiffer>false</organismsDiffer>
    <experiments>3</experiments>
</comment>
<comment type="interaction">
    <interactant intactId="EBI-18159983">
        <id>Q3KNW5</id>
    </interactant>
    <interactant intactId="EBI-747259">
        <id>Q03518</id>
        <label>TAP1</label>
    </interactant>
    <organismsDiffer>false</organismsDiffer>
    <experiments>3</experiments>
</comment>
<comment type="interaction">
    <interactant intactId="EBI-18159983">
        <id>Q3KNW5</id>
    </interactant>
    <interactant intactId="EBI-2877718">
        <id>Q9NZ01</id>
        <label>TECR</label>
    </interactant>
    <organismsDiffer>false</organismsDiffer>
    <experiments>3</experiments>
</comment>
<comment type="interaction">
    <interactant intactId="EBI-18159983">
        <id>Q3KNW5</id>
    </interactant>
    <interactant intactId="EBI-714319">
        <id>P02787</id>
        <label>TF</label>
    </interactant>
    <organismsDiffer>false</organismsDiffer>
    <experiments>3</experiments>
</comment>
<comment type="interaction">
    <interactant intactId="EBI-18159983">
        <id>Q3KNW5</id>
    </interactant>
    <interactant intactId="EBI-8650934">
        <id>P48230</id>
        <label>TM4SF4</label>
    </interactant>
    <organismsDiffer>false</organismsDiffer>
    <experiments>3</experiments>
</comment>
<comment type="interaction">
    <interactant intactId="EBI-18159983">
        <id>Q3KNW5</id>
    </interactant>
    <interactant intactId="EBI-12845616">
        <id>Q6UX40</id>
        <label>TMEM107</label>
    </interactant>
    <organismsDiffer>false</organismsDiffer>
    <experiments>3</experiments>
</comment>
<comment type="interaction">
    <interactant intactId="EBI-18159983">
        <id>Q3KNW5</id>
    </interactant>
    <interactant intactId="EBI-723946">
        <id>P17152</id>
        <label>TMEM11</label>
    </interactant>
    <organismsDiffer>false</organismsDiffer>
    <experiments>3</experiments>
</comment>
<comment type="interaction">
    <interactant intactId="EBI-18159983">
        <id>Q3KNW5</id>
    </interactant>
    <interactant intactId="EBI-10171534">
        <id>A0PK00</id>
        <label>TMEM120B</label>
    </interactant>
    <organismsDiffer>false</organismsDiffer>
    <experiments>3</experiments>
</comment>
<comment type="interaction">
    <interactant intactId="EBI-18159983">
        <id>Q3KNW5</id>
    </interactant>
    <interactant intactId="EBI-10694905">
        <id>Q5BJH2-2</id>
        <label>TMEM128</label>
    </interactant>
    <organismsDiffer>false</organismsDiffer>
    <experiments>3</experiments>
</comment>
<comment type="interaction">
    <interactant intactId="EBI-18159983">
        <id>Q3KNW5</id>
    </interactant>
    <interactant intactId="EBI-13342951">
        <id>Q96AN5</id>
        <label>TMEM143</label>
    </interactant>
    <organismsDiffer>false</organismsDiffer>
    <experiments>3</experiments>
</comment>
<comment type="interaction">
    <interactant intactId="EBI-18159983">
        <id>Q3KNW5</id>
    </interactant>
    <interactant intactId="EBI-2800360">
        <id>Q9Y6G1</id>
        <label>TMEM14A</label>
    </interactant>
    <organismsDiffer>false</organismsDiffer>
    <experiments>3</experiments>
</comment>
<comment type="interaction">
    <interactant intactId="EBI-18159983">
        <id>Q3KNW5</id>
    </interactant>
    <interactant intactId="EBI-2339195">
        <id>Q9P0S9</id>
        <label>TMEM14C</label>
    </interactant>
    <organismsDiffer>false</organismsDiffer>
    <experiments>3</experiments>
</comment>
<comment type="interaction">
    <interactant intactId="EBI-18159983">
        <id>Q3KNW5</id>
    </interactant>
    <interactant intactId="EBI-12274070">
        <id>Q969S6</id>
        <label>TMEM203</label>
    </interactant>
    <organismsDiffer>false</organismsDiffer>
    <experiments>3</experiments>
</comment>
<comment type="interaction">
    <interactant intactId="EBI-18159983">
        <id>Q3KNW5</id>
    </interactant>
    <interactant intactId="EBI-12876824">
        <id>Q9BTX3</id>
        <label>TMEM208</label>
    </interactant>
    <organismsDiffer>false</organismsDiffer>
    <experiments>3</experiments>
</comment>
<comment type="interaction">
    <interactant intactId="EBI-18159983">
        <id>Q3KNW5</id>
    </interactant>
    <interactant intactId="EBI-10173151">
        <id>A2RU14</id>
        <label>TMEM218</label>
    </interactant>
    <organismsDiffer>false</organismsDiffer>
    <experiments>3</experiments>
</comment>
<comment type="interaction">
    <interactant intactId="EBI-18159983">
        <id>Q3KNW5</id>
    </interactant>
    <interactant intactId="EBI-12195227">
        <id>Q8NBD8</id>
        <label>TMEM229B</label>
    </interactant>
    <organismsDiffer>false</organismsDiffer>
    <experiments>3</experiments>
</comment>
<comment type="interaction">
    <interactant intactId="EBI-18159983">
        <id>Q3KNW5</id>
    </interactant>
    <interactant intactId="EBI-8642211">
        <id>Q8WY98</id>
        <label>TMEM234</label>
    </interactant>
    <organismsDiffer>false</organismsDiffer>
    <experiments>3</experiments>
</comment>
<comment type="interaction">
    <interactant intactId="EBI-18159983">
        <id>Q3KNW5</id>
    </interactant>
    <interactant intactId="EBI-11528917">
        <id>Q8WW34-2</id>
        <label>TMEM239</label>
    </interactant>
    <organismsDiffer>false</organismsDiffer>
    <experiments>3</experiments>
</comment>
<comment type="interaction">
    <interactant intactId="EBI-18159983">
        <id>Q3KNW5</id>
    </interactant>
    <interactant intactId="EBI-10315004">
        <id>Q9NWH2</id>
        <label>TMEM242</label>
    </interactant>
    <organismsDiffer>false</organismsDiffer>
    <experiments>3</experiments>
</comment>
<comment type="interaction">
    <interactant intactId="EBI-18159983">
        <id>Q3KNW5</id>
    </interactant>
    <interactant intactId="EBI-8787626">
        <id>Q8N6L7</id>
        <label>TMEM252</label>
    </interactant>
    <organismsDiffer>false</organismsDiffer>
    <experiments>3</experiments>
</comment>
<comment type="interaction">
    <interactant intactId="EBI-18159983">
        <id>Q3KNW5</id>
    </interactant>
    <interactant intactId="EBI-17180389">
        <id>E9PQX1</id>
        <label>TMEM262</label>
    </interactant>
    <organismsDiffer>false</organismsDiffer>
    <experiments>3</experiments>
</comment>
<comment type="interaction">
    <interactant intactId="EBI-18159983">
        <id>Q3KNW5</id>
    </interactant>
    <interactant intactId="EBI-12366453">
        <id>P56557</id>
        <label>TMEM50B</label>
    </interactant>
    <organismsDiffer>false</organismsDiffer>
    <experiments>3</experiments>
</comment>
<comment type="interaction">
    <interactant intactId="EBI-18159983">
        <id>Q3KNW5</id>
    </interactant>
    <interactant intactId="EBI-2852148">
        <id>Q9H2L4</id>
        <label>TMEM60</label>
    </interactant>
    <organismsDiffer>false</organismsDiffer>
    <experiments>3</experiments>
</comment>
<comment type="interaction">
    <interactant intactId="EBI-18159983">
        <id>Q3KNW5</id>
    </interactant>
    <interactant intactId="EBI-6656213">
        <id>Q6PI78</id>
        <label>TMEM65</label>
    </interactant>
    <organismsDiffer>false</organismsDiffer>
    <experiments>3</experiments>
</comment>
<comment type="interaction">
    <interactant intactId="EBI-18159983">
        <id>Q3KNW5</id>
    </interactant>
    <interactant intactId="EBI-12015604">
        <id>Q8N2M4</id>
        <label>TMEM86A</label>
    </interactant>
    <organismsDiffer>false</organismsDiffer>
    <experiments>3</experiments>
</comment>
<comment type="interaction">
    <interactant intactId="EBI-18159983">
        <id>Q3KNW5</id>
    </interactant>
    <interactant intactId="EBI-2548832">
        <id>Q8N661</id>
        <label>TMEM86B</label>
    </interactant>
    <organismsDiffer>false</organismsDiffer>
    <experiments>3</experiments>
</comment>
<comment type="interaction">
    <interactant intactId="EBI-18159983">
        <id>Q3KNW5</id>
    </interactant>
    <interactant intactId="EBI-17249488">
        <id>Q6ZUI0</id>
        <label>TPRG1</label>
    </interactant>
    <organismsDiffer>false</organismsDiffer>
    <experiments>3</experiments>
</comment>
<comment type="interaction">
    <interactant intactId="EBI-18159983">
        <id>Q3KNW5</id>
    </interactant>
    <interactant intactId="EBI-16746122">
        <id>Q9NSU2-1</id>
        <label>TREX1</label>
    </interactant>
    <organismsDiffer>false</organismsDiffer>
    <experiments>3</experiments>
</comment>
<comment type="interaction">
    <interactant intactId="EBI-18159983">
        <id>Q3KNW5</id>
    </interactant>
    <interactant intactId="EBI-12003468">
        <id>A0AVG3</id>
        <label>TSNARE1</label>
    </interactant>
    <organismsDiffer>false</organismsDiffer>
    <experiments>3</experiments>
</comment>
<comment type="interaction">
    <interactant intactId="EBI-18159983">
        <id>Q3KNW5</id>
    </interactant>
    <interactant intactId="EBI-3914288">
        <id>O60636</id>
        <label>TSPAN2</label>
    </interactant>
    <organismsDiffer>false</organismsDiffer>
    <experiments>3</experiments>
</comment>
<comment type="interaction">
    <interactant intactId="EBI-18159983">
        <id>Q3KNW5</id>
    </interactant>
    <interactant intactId="EBI-12195249">
        <id>Q5TGU0</id>
        <label>TSPO2</label>
    </interactant>
    <organismsDiffer>false</organismsDiffer>
    <experiments>3</experiments>
</comment>
<comment type="interaction">
    <interactant intactId="EBI-18159983">
        <id>Q3KNW5</id>
    </interactant>
    <interactant intactId="EBI-11343401">
        <id>Q9NYZ1</id>
        <label>TVP23B</label>
    </interactant>
    <organismsDiffer>false</organismsDiffer>
    <experiments>3</experiments>
</comment>
<comment type="interaction">
    <interactant intactId="EBI-18159983">
        <id>Q3KNW5</id>
    </interactant>
    <interactant intactId="EBI-988826">
        <id>Q9Y385</id>
        <label>UBE2J1</label>
    </interactant>
    <organismsDiffer>false</organismsDiffer>
    <experiments>3</experiments>
</comment>
<comment type="interaction">
    <interactant intactId="EBI-18159983">
        <id>Q3KNW5</id>
    </interactant>
    <interactant intactId="EBI-7601760">
        <id>Q53HI1</id>
        <label>UNC50</label>
    </interactant>
    <organismsDiffer>false</organismsDiffer>
    <experiments>3</experiments>
</comment>
<comment type="interaction">
    <interactant intactId="EBI-18159983">
        <id>Q3KNW5</id>
    </interactant>
    <interactant intactId="EBI-744953">
        <id>O75379</id>
        <label>VAMP4</label>
    </interactant>
    <organismsDiffer>false</organismsDiffer>
    <experiments>3</experiments>
</comment>
<comment type="interaction">
    <interactant intactId="EBI-18159983">
        <id>Q3KNW5</id>
    </interactant>
    <interactant intactId="EBI-7850136">
        <id>Q9Y548</id>
        <label>YIPF1</label>
    </interactant>
    <organismsDiffer>false</organismsDiffer>
    <experiments>3</experiments>
</comment>
<comment type="interaction">
    <interactant intactId="EBI-18159983">
        <id>Q3KNW5</id>
    </interactant>
    <interactant intactId="EBI-751204">
        <id>Q9BWQ6</id>
        <label>YIPF2</label>
    </interactant>
    <organismsDiffer>false</organismsDiffer>
    <experiments>3</experiments>
</comment>
<comment type="interaction">
    <interactant intactId="EBI-18159983">
        <id>Q3KNW5</id>
    </interactant>
    <interactant intactId="EBI-751210">
        <id>Q96EC8</id>
        <label>YIPF6</label>
    </interactant>
    <organismsDiffer>false</organismsDiffer>
    <experiments>3</experiments>
</comment>
<comment type="interaction">
    <interactant intactId="EBI-18159983">
        <id>Q3KNW5</id>
    </interactant>
    <interactant intactId="EBI-12837904">
        <id>Q96MV8</id>
        <label>ZDHHC15</label>
    </interactant>
    <organismsDiffer>false</organismsDiffer>
    <experiments>3</experiments>
</comment>
<comment type="interaction">
    <interactant intactId="EBI-18159983">
        <id>Q3KNW5</id>
    </interactant>
    <interactant intactId="EBI-718439">
        <id>O95159</id>
        <label>ZFPL1</label>
    </interactant>
    <organismsDiffer>false</organismsDiffer>
    <experiments>3</experiments>
</comment>
<comment type="interaction">
    <interactant intactId="EBI-18159983">
        <id>Q3KNW5</id>
    </interactant>
    <interactant intactId="EBI-2857623">
        <id>Q96FB2</id>
    </interactant>
    <organismsDiffer>false</organismsDiffer>
    <experiments>3</experiments>
</comment>
<comment type="subcellular location">
    <subcellularLocation>
        <location evidence="5">Membrane</location>
        <topology evidence="10">Multi-pass membrane protein</topology>
    </subcellularLocation>
</comment>
<comment type="tissue specificity">
    <text evidence="4 5">Highly expressed in testis, placenta and pancreas. Moderately expressed in heart, lung and mammary gland. Weakly expressed in brain, colon, kidney, liver, ovary, prostate, small intestine, spleen and thymus.</text>
</comment>
<comment type="PTM">
    <text evidence="4">Glycosylated.</text>
</comment>
<comment type="miscellaneous">
    <text evidence="1">In humans, 3-beta-sulfooxy-androst-5-en-17-one (DHEAS) is the most abundant circulating steroid sulfate in the human body, it is mainly synthesized from adrenal glands and gonads, whereas rats and mice have low circulating concentrations of DHEAS in the periphery as they can only produce DHEAS in their gonads.</text>
</comment>
<comment type="similarity">
    <text evidence="10">Belongs to the bile acid:sodium symporter (BASS) (TC 2.A.28) family.</text>
</comment>
<name>SOAT_HUMAN</name>
<organism>
    <name type="scientific">Homo sapiens</name>
    <name type="common">Human</name>
    <dbReference type="NCBI Taxonomy" id="9606"/>
    <lineage>
        <taxon>Eukaryota</taxon>
        <taxon>Metazoa</taxon>
        <taxon>Chordata</taxon>
        <taxon>Craniata</taxon>
        <taxon>Vertebrata</taxon>
        <taxon>Euteleostomi</taxon>
        <taxon>Mammalia</taxon>
        <taxon>Eutheria</taxon>
        <taxon>Euarchontoglires</taxon>
        <taxon>Primates</taxon>
        <taxon>Haplorrhini</taxon>
        <taxon>Catarrhini</taxon>
        <taxon>Hominidae</taxon>
        <taxon>Homo</taxon>
    </lineage>
</organism>
<dbReference type="EMBL" id="EF437223">
    <property type="protein sequence ID" value="ABO38126.1"/>
    <property type="molecule type" value="mRNA"/>
</dbReference>
<dbReference type="EMBL" id="AJ583502">
    <property type="protein sequence ID" value="CAE47477.1"/>
    <property type="molecule type" value="mRNA"/>
</dbReference>
<dbReference type="EMBL" id="CH471057">
    <property type="protein sequence ID" value="EAX05969.1"/>
    <property type="molecule type" value="Genomic_DNA"/>
</dbReference>
<dbReference type="EMBL" id="BC107051">
    <property type="protein sequence ID" value="AAI07052.1"/>
    <property type="molecule type" value="mRNA"/>
</dbReference>
<dbReference type="EMBL" id="BC107052">
    <property type="protein sequence ID" value="AAI07053.1"/>
    <property type="molecule type" value="mRNA"/>
</dbReference>
<dbReference type="CCDS" id="CCDS3614.1"/>
<dbReference type="RefSeq" id="NP_932069.1">
    <property type="nucleotide sequence ID" value="NM_197965.3"/>
</dbReference>
<dbReference type="SMR" id="Q3KNW5"/>
<dbReference type="BioGRID" id="131345">
    <property type="interactions" value="178"/>
</dbReference>
<dbReference type="CORUM" id="Q3KNW5"/>
<dbReference type="FunCoup" id="Q3KNW5">
    <property type="interactions" value="39"/>
</dbReference>
<dbReference type="IntAct" id="Q3KNW5">
    <property type="interactions" value="147"/>
</dbReference>
<dbReference type="MINT" id="Q3KNW5"/>
<dbReference type="STRING" id="9606.ENSP00000273905"/>
<dbReference type="DrugBank" id="DB05804">
    <property type="generic name" value="Prasterone sulfate"/>
</dbReference>
<dbReference type="DrugBank" id="DB02789">
    <property type="generic name" value="Pregnenolone"/>
</dbReference>
<dbReference type="TCDB" id="2.A.28.1.4">
    <property type="family name" value="the bile acid:na(+) symporter (bass) family"/>
</dbReference>
<dbReference type="GlyCosmos" id="Q3KNW5">
    <property type="glycosylation" value="2 sites, No reported glycans"/>
</dbReference>
<dbReference type="GlyGen" id="Q3KNW5">
    <property type="glycosylation" value="2 sites"/>
</dbReference>
<dbReference type="BioMuta" id="SLC10A6"/>
<dbReference type="DMDM" id="160358735"/>
<dbReference type="PaxDb" id="9606-ENSP00000273905"/>
<dbReference type="PeptideAtlas" id="Q3KNW5"/>
<dbReference type="Antibodypedia" id="14387">
    <property type="antibodies" value="39 antibodies from 12 providers"/>
</dbReference>
<dbReference type="DNASU" id="345274"/>
<dbReference type="Ensembl" id="ENST00000273905.7">
    <property type="protein sequence ID" value="ENSP00000273905.6"/>
    <property type="gene ID" value="ENSG00000145283.8"/>
</dbReference>
<dbReference type="GeneID" id="345274"/>
<dbReference type="KEGG" id="hsa:345274"/>
<dbReference type="MANE-Select" id="ENST00000273905.7">
    <property type="protein sequence ID" value="ENSP00000273905.6"/>
    <property type="RefSeq nucleotide sequence ID" value="NM_197965.3"/>
    <property type="RefSeq protein sequence ID" value="NP_932069.1"/>
</dbReference>
<dbReference type="UCSC" id="uc003hqd.2">
    <property type="organism name" value="human"/>
</dbReference>
<dbReference type="AGR" id="HGNC:30603"/>
<dbReference type="CTD" id="345274"/>
<dbReference type="DisGeNET" id="345274"/>
<dbReference type="GeneCards" id="SLC10A6"/>
<dbReference type="HGNC" id="HGNC:30603">
    <property type="gene designation" value="SLC10A6"/>
</dbReference>
<dbReference type="HPA" id="ENSG00000145283">
    <property type="expression patterns" value="Tissue enhanced (esophagus, skin)"/>
</dbReference>
<dbReference type="MIM" id="613366">
    <property type="type" value="gene"/>
</dbReference>
<dbReference type="neXtProt" id="NX_Q3KNW5"/>
<dbReference type="OpenTargets" id="ENSG00000145283"/>
<dbReference type="PharmGKB" id="PA142670910"/>
<dbReference type="VEuPathDB" id="HostDB:ENSG00000145283"/>
<dbReference type="eggNOG" id="KOG2718">
    <property type="taxonomic scope" value="Eukaryota"/>
</dbReference>
<dbReference type="GeneTree" id="ENSGT00950000182808"/>
<dbReference type="HOGENOM" id="CLU_034788_7_5_1"/>
<dbReference type="InParanoid" id="Q3KNW5"/>
<dbReference type="OMA" id="CLYLYTW"/>
<dbReference type="OrthoDB" id="203097at2759"/>
<dbReference type="PAN-GO" id="Q3KNW5">
    <property type="GO annotations" value="2 GO annotations based on evolutionary models"/>
</dbReference>
<dbReference type="PhylomeDB" id="Q3KNW5"/>
<dbReference type="TreeFam" id="TF315811"/>
<dbReference type="PathwayCommons" id="Q3KNW5"/>
<dbReference type="Reactome" id="R-HSA-425366">
    <property type="pathway name" value="Transport of bile salts and organic acids, metal ions and amine compounds"/>
</dbReference>
<dbReference type="SignaLink" id="Q3KNW5"/>
<dbReference type="BioGRID-ORCS" id="345274">
    <property type="hits" value="8 hits in 1141 CRISPR screens"/>
</dbReference>
<dbReference type="GenomeRNAi" id="345274"/>
<dbReference type="Pharos" id="Q3KNW5">
    <property type="development level" value="Tdark"/>
</dbReference>
<dbReference type="PRO" id="PR:Q3KNW5"/>
<dbReference type="Proteomes" id="UP000005640">
    <property type="component" value="Chromosome 4"/>
</dbReference>
<dbReference type="RNAct" id="Q3KNW5">
    <property type="molecule type" value="protein"/>
</dbReference>
<dbReference type="Bgee" id="ENSG00000145283">
    <property type="expression patterns" value="Expressed in skin of abdomen and 82 other cell types or tissues"/>
</dbReference>
<dbReference type="GO" id="GO:0005886">
    <property type="term" value="C:plasma membrane"/>
    <property type="evidence" value="ECO:0000304"/>
    <property type="project" value="Reactome"/>
</dbReference>
<dbReference type="GO" id="GO:0008508">
    <property type="term" value="F:bile acid:sodium symporter activity"/>
    <property type="evidence" value="ECO:0000318"/>
    <property type="project" value="GO_Central"/>
</dbReference>
<dbReference type="GO" id="GO:0043250">
    <property type="term" value="F:sodium-dependent organic anion transmembrane transporter activity"/>
    <property type="evidence" value="ECO:0007669"/>
    <property type="project" value="Ensembl"/>
</dbReference>
<dbReference type="GO" id="GO:0015721">
    <property type="term" value="P:bile acid and bile salt transport"/>
    <property type="evidence" value="ECO:0000318"/>
    <property type="project" value="GO_Central"/>
</dbReference>
<dbReference type="GO" id="GO:0043251">
    <property type="term" value="P:sodium-dependent organic anion transport"/>
    <property type="evidence" value="ECO:0007669"/>
    <property type="project" value="Ensembl"/>
</dbReference>
<dbReference type="GO" id="GO:0055085">
    <property type="term" value="P:transmembrane transport"/>
    <property type="evidence" value="ECO:0000304"/>
    <property type="project" value="Reactome"/>
</dbReference>
<dbReference type="FunFam" id="1.20.1530.20:FF:000010">
    <property type="entry name" value="Solute carrier family 10 member 6"/>
    <property type="match status" value="1"/>
</dbReference>
<dbReference type="Gene3D" id="1.20.1530.20">
    <property type="match status" value="1"/>
</dbReference>
<dbReference type="InterPro" id="IPR002657">
    <property type="entry name" value="BilAc:Na_symport/Acr3"/>
</dbReference>
<dbReference type="InterPro" id="IPR004710">
    <property type="entry name" value="Bilac:Na_transpt"/>
</dbReference>
<dbReference type="InterPro" id="IPR038770">
    <property type="entry name" value="Na+/solute_symporter_sf"/>
</dbReference>
<dbReference type="NCBIfam" id="TIGR00841">
    <property type="entry name" value="bass"/>
    <property type="match status" value="1"/>
</dbReference>
<dbReference type="PANTHER" id="PTHR10361">
    <property type="entry name" value="SODIUM-BILE ACID COTRANSPORTER"/>
    <property type="match status" value="1"/>
</dbReference>
<dbReference type="PANTHER" id="PTHR10361:SF55">
    <property type="entry name" value="SODIUM-DEPENDENT ORGANIC ANION TRANSPORTER"/>
    <property type="match status" value="1"/>
</dbReference>
<dbReference type="Pfam" id="PF01758">
    <property type="entry name" value="SBF"/>
    <property type="match status" value="1"/>
</dbReference>